<keyword id="KW-0687">Ribonucleoprotein</keyword>
<keyword id="KW-0689">Ribosomal protein</keyword>
<keyword id="KW-0694">RNA-binding</keyword>
<keyword id="KW-0699">rRNA-binding</keyword>
<keyword id="KW-0820">tRNA-binding</keyword>
<accession>Q6N4U1</accession>
<sequence length="137" mass="15282">MMQPKRTKFRKAHKGRIHGVASSGATLAFGQFGLKAMEPERITARQIEAARRALTRHMKRAGRVWIRVFPDLPVSKKPAEVRMGSGKGSPELWVARVKPGRVMFEIDGVNQQIAREALTLAAAKLPIKTRFVARIAE</sequence>
<comment type="function">
    <text evidence="1">Binds 23S rRNA and is also seen to make contacts with the A and possibly P site tRNAs.</text>
</comment>
<comment type="subunit">
    <text evidence="1">Part of the 50S ribosomal subunit.</text>
</comment>
<comment type="similarity">
    <text evidence="1">Belongs to the universal ribosomal protein uL16 family.</text>
</comment>
<reference key="1">
    <citation type="journal article" date="2004" name="Nat. Biotechnol.">
        <title>Complete genome sequence of the metabolically versatile photosynthetic bacterium Rhodopseudomonas palustris.</title>
        <authorList>
            <person name="Larimer F.W."/>
            <person name="Chain P."/>
            <person name="Hauser L."/>
            <person name="Lamerdin J.E."/>
            <person name="Malfatti S."/>
            <person name="Do L."/>
            <person name="Land M.L."/>
            <person name="Pelletier D.A."/>
            <person name="Beatty J.T."/>
            <person name="Lang A.S."/>
            <person name="Tabita F.R."/>
            <person name="Gibson J.L."/>
            <person name="Hanson T.E."/>
            <person name="Bobst C."/>
            <person name="Torres y Torres J.L."/>
            <person name="Peres C."/>
            <person name="Harrison F.H."/>
            <person name="Gibson J."/>
            <person name="Harwood C.S."/>
        </authorList>
    </citation>
    <scope>NUCLEOTIDE SEQUENCE [LARGE SCALE GENOMIC DNA]</scope>
    <source>
        <strain>ATCC BAA-98 / CGA009</strain>
    </source>
</reference>
<reference key="2">
    <citation type="journal article" date="2004" name="J. Proteome Res.">
        <title>Characterization of the 70S ribosome from Rhodopseudomonas palustris using an integrated 'top-down' and 'bottom-up' mass spectrometric approach.</title>
        <authorList>
            <person name="Strader M.B."/>
            <person name="VerBerkmoes N.C."/>
            <person name="Tabb D.L."/>
            <person name="Connelly H.M."/>
            <person name="Barton J.W."/>
            <person name="Bruce B.D."/>
            <person name="Pelletier D.A."/>
            <person name="Davison B.H."/>
            <person name="Hettich R.L."/>
            <person name="Larimer F.W."/>
            <person name="Hurst G.B."/>
        </authorList>
    </citation>
    <scope>IDENTIFICATION BY MASS SPECTROMETRY</scope>
    <source>
        <strain>ATCC BAA-98 / CGA009</strain>
    </source>
</reference>
<name>RL16_RHOPA</name>
<proteinExistence type="evidence at protein level"/>
<feature type="chain" id="PRO_0000062185" description="Large ribosomal subunit protein uL16">
    <location>
        <begin position="1"/>
        <end position="137"/>
    </location>
</feature>
<dbReference type="EMBL" id="BX572603">
    <property type="protein sequence ID" value="CAE28684.1"/>
    <property type="molecule type" value="Genomic_DNA"/>
</dbReference>
<dbReference type="RefSeq" id="WP_011158788.1">
    <property type="nucleotide sequence ID" value="NZ_CP116810.1"/>
</dbReference>
<dbReference type="SMR" id="Q6N4U1"/>
<dbReference type="IntAct" id="Q6N4U1">
    <property type="interactions" value="1"/>
</dbReference>
<dbReference type="STRING" id="258594.RPA3243"/>
<dbReference type="GeneID" id="66894329"/>
<dbReference type="eggNOG" id="COG0197">
    <property type="taxonomic scope" value="Bacteria"/>
</dbReference>
<dbReference type="HOGENOM" id="CLU_078858_2_1_5"/>
<dbReference type="PhylomeDB" id="Q6N4U1"/>
<dbReference type="GO" id="GO:0022625">
    <property type="term" value="C:cytosolic large ribosomal subunit"/>
    <property type="evidence" value="ECO:0007669"/>
    <property type="project" value="TreeGrafter"/>
</dbReference>
<dbReference type="GO" id="GO:0019843">
    <property type="term" value="F:rRNA binding"/>
    <property type="evidence" value="ECO:0007669"/>
    <property type="project" value="UniProtKB-UniRule"/>
</dbReference>
<dbReference type="GO" id="GO:0003735">
    <property type="term" value="F:structural constituent of ribosome"/>
    <property type="evidence" value="ECO:0007669"/>
    <property type="project" value="InterPro"/>
</dbReference>
<dbReference type="GO" id="GO:0000049">
    <property type="term" value="F:tRNA binding"/>
    <property type="evidence" value="ECO:0007669"/>
    <property type="project" value="UniProtKB-KW"/>
</dbReference>
<dbReference type="GO" id="GO:0006412">
    <property type="term" value="P:translation"/>
    <property type="evidence" value="ECO:0007669"/>
    <property type="project" value="UniProtKB-UniRule"/>
</dbReference>
<dbReference type="CDD" id="cd01433">
    <property type="entry name" value="Ribosomal_L16_L10e"/>
    <property type="match status" value="1"/>
</dbReference>
<dbReference type="FunFam" id="3.90.1170.10:FF:000001">
    <property type="entry name" value="50S ribosomal protein L16"/>
    <property type="match status" value="1"/>
</dbReference>
<dbReference type="Gene3D" id="3.90.1170.10">
    <property type="entry name" value="Ribosomal protein L10e/L16"/>
    <property type="match status" value="1"/>
</dbReference>
<dbReference type="HAMAP" id="MF_01342">
    <property type="entry name" value="Ribosomal_uL16"/>
    <property type="match status" value="1"/>
</dbReference>
<dbReference type="InterPro" id="IPR047873">
    <property type="entry name" value="Ribosomal_uL16"/>
</dbReference>
<dbReference type="InterPro" id="IPR000114">
    <property type="entry name" value="Ribosomal_uL16_bact-type"/>
</dbReference>
<dbReference type="InterPro" id="IPR020798">
    <property type="entry name" value="Ribosomal_uL16_CS"/>
</dbReference>
<dbReference type="InterPro" id="IPR016180">
    <property type="entry name" value="Ribosomal_uL16_dom"/>
</dbReference>
<dbReference type="InterPro" id="IPR036920">
    <property type="entry name" value="Ribosomal_uL16_sf"/>
</dbReference>
<dbReference type="NCBIfam" id="TIGR01164">
    <property type="entry name" value="rplP_bact"/>
    <property type="match status" value="1"/>
</dbReference>
<dbReference type="PANTHER" id="PTHR12220">
    <property type="entry name" value="50S/60S RIBOSOMAL PROTEIN L16"/>
    <property type="match status" value="1"/>
</dbReference>
<dbReference type="PANTHER" id="PTHR12220:SF13">
    <property type="entry name" value="LARGE RIBOSOMAL SUBUNIT PROTEIN UL16M"/>
    <property type="match status" value="1"/>
</dbReference>
<dbReference type="Pfam" id="PF00252">
    <property type="entry name" value="Ribosomal_L16"/>
    <property type="match status" value="1"/>
</dbReference>
<dbReference type="PRINTS" id="PR00060">
    <property type="entry name" value="RIBOSOMALL16"/>
</dbReference>
<dbReference type="SUPFAM" id="SSF54686">
    <property type="entry name" value="Ribosomal protein L16p/L10e"/>
    <property type="match status" value="1"/>
</dbReference>
<dbReference type="PROSITE" id="PS00586">
    <property type="entry name" value="RIBOSOMAL_L16_1"/>
    <property type="match status" value="1"/>
</dbReference>
<dbReference type="PROSITE" id="PS00701">
    <property type="entry name" value="RIBOSOMAL_L16_2"/>
    <property type="match status" value="1"/>
</dbReference>
<organism>
    <name type="scientific">Rhodopseudomonas palustris (strain ATCC BAA-98 / CGA009)</name>
    <dbReference type="NCBI Taxonomy" id="258594"/>
    <lineage>
        <taxon>Bacteria</taxon>
        <taxon>Pseudomonadati</taxon>
        <taxon>Pseudomonadota</taxon>
        <taxon>Alphaproteobacteria</taxon>
        <taxon>Hyphomicrobiales</taxon>
        <taxon>Nitrobacteraceae</taxon>
        <taxon>Rhodopseudomonas</taxon>
    </lineage>
</organism>
<protein>
    <recommendedName>
        <fullName evidence="1">Large ribosomal subunit protein uL16</fullName>
    </recommendedName>
    <alternativeName>
        <fullName evidence="2">50S ribosomal protein L16</fullName>
    </alternativeName>
    <alternativeName>
        <fullName>RRP-L16</fullName>
    </alternativeName>
</protein>
<gene>
    <name evidence="1" type="primary">rplP</name>
    <name type="ordered locus">RPA3243</name>
</gene>
<evidence type="ECO:0000255" key="1">
    <source>
        <dbReference type="HAMAP-Rule" id="MF_01342"/>
    </source>
</evidence>
<evidence type="ECO:0000305" key="2"/>